<sequence length="328" mass="35355">MTSTKQHKKVILVGDGAVGSSYAFALVNQGIAQELGIIEIPQLHEKAVGDALDLSHALAFTSPKKIYAAQYSDCADADLVVITAGAPQKPGETRLDLVGKNLAINKSIVTQVVESGFKGIFLVAANPVDVLTYSTWKFSGFPKERVIGSGTSLDSARFRQALAEKLDVDARSVHAYIMGEHGDSEFAVWSHANIAGVNLEEFLKDTQNVQEAELIELFEGVRDAAYTIINKKGATYYGIAVALARITKAILDDENAVLPLSVFQEGQYGVENVFIGQPAVVGAHGIVRPVNIPLNDAETQKMQASAKELQAIIDEAWKNPEFQEASKN</sequence>
<keyword id="KW-0021">Allosteric enzyme</keyword>
<keyword id="KW-0963">Cytoplasm</keyword>
<keyword id="KW-0903">Direct protein sequencing</keyword>
<keyword id="KW-0520">NAD</keyword>
<keyword id="KW-0560">Oxidoreductase</keyword>
<keyword id="KW-0597">Phosphoprotein</keyword>
<keyword id="KW-1185">Reference proteome</keyword>
<dbReference type="EC" id="1.1.1.27" evidence="1"/>
<dbReference type="EMBL" id="AJ000336">
    <property type="protein sequence ID" value="CAA04010.1"/>
    <property type="molecule type" value="Genomic_DNA"/>
</dbReference>
<dbReference type="EMBL" id="AE007317">
    <property type="protein sequence ID" value="AAK99903.1"/>
    <property type="molecule type" value="Genomic_DNA"/>
</dbReference>
<dbReference type="PIR" id="C98009">
    <property type="entry name" value="C98009"/>
</dbReference>
<dbReference type="RefSeq" id="NP_358693.1">
    <property type="nucleotide sequence ID" value="NC_003098.1"/>
</dbReference>
<dbReference type="RefSeq" id="WP_000204727.1">
    <property type="nucleotide sequence ID" value="NC_003098.1"/>
</dbReference>
<dbReference type="SMR" id="P0A3N0"/>
<dbReference type="STRING" id="171101.spr1100"/>
<dbReference type="KEGG" id="spr:spr1100"/>
<dbReference type="PATRIC" id="fig|171101.6.peg.1195"/>
<dbReference type="eggNOG" id="COG0039">
    <property type="taxonomic scope" value="Bacteria"/>
</dbReference>
<dbReference type="HOGENOM" id="CLU_045401_1_1_9"/>
<dbReference type="UniPathway" id="UPA00554">
    <property type="reaction ID" value="UER00611"/>
</dbReference>
<dbReference type="Proteomes" id="UP000000586">
    <property type="component" value="Chromosome"/>
</dbReference>
<dbReference type="GO" id="GO:0005737">
    <property type="term" value="C:cytoplasm"/>
    <property type="evidence" value="ECO:0007669"/>
    <property type="project" value="UniProtKB-SubCell"/>
</dbReference>
<dbReference type="GO" id="GO:0004459">
    <property type="term" value="F:L-lactate dehydrogenase activity"/>
    <property type="evidence" value="ECO:0000318"/>
    <property type="project" value="GO_Central"/>
</dbReference>
<dbReference type="GO" id="GO:0006096">
    <property type="term" value="P:glycolytic process"/>
    <property type="evidence" value="ECO:0007669"/>
    <property type="project" value="UniProtKB-UniRule"/>
</dbReference>
<dbReference type="GO" id="GO:0006089">
    <property type="term" value="P:lactate metabolic process"/>
    <property type="evidence" value="ECO:0000318"/>
    <property type="project" value="GO_Central"/>
</dbReference>
<dbReference type="GO" id="GO:0006090">
    <property type="term" value="P:pyruvate metabolic process"/>
    <property type="evidence" value="ECO:0000318"/>
    <property type="project" value="GO_Central"/>
</dbReference>
<dbReference type="CDD" id="cd05291">
    <property type="entry name" value="HicDH_like"/>
    <property type="match status" value="1"/>
</dbReference>
<dbReference type="FunFam" id="3.40.50.720:FF:000018">
    <property type="entry name" value="Malate dehydrogenase"/>
    <property type="match status" value="1"/>
</dbReference>
<dbReference type="Gene3D" id="3.90.110.10">
    <property type="entry name" value="Lactate dehydrogenase/glycoside hydrolase, family 4, C-terminal"/>
    <property type="match status" value="1"/>
</dbReference>
<dbReference type="Gene3D" id="3.40.50.720">
    <property type="entry name" value="NAD(P)-binding Rossmann-like Domain"/>
    <property type="match status" value="1"/>
</dbReference>
<dbReference type="HAMAP" id="MF_00488">
    <property type="entry name" value="Lactate_dehydrog"/>
    <property type="match status" value="1"/>
</dbReference>
<dbReference type="InterPro" id="IPR001557">
    <property type="entry name" value="L-lactate/malate_DH"/>
</dbReference>
<dbReference type="InterPro" id="IPR011304">
    <property type="entry name" value="L-lactate_DH"/>
</dbReference>
<dbReference type="InterPro" id="IPR018177">
    <property type="entry name" value="L-lactate_DH_AS"/>
</dbReference>
<dbReference type="InterPro" id="IPR022383">
    <property type="entry name" value="Lactate/malate_DH_C"/>
</dbReference>
<dbReference type="InterPro" id="IPR001236">
    <property type="entry name" value="Lactate/malate_DH_N"/>
</dbReference>
<dbReference type="InterPro" id="IPR015955">
    <property type="entry name" value="Lactate_DH/Glyco_Ohase_4_C"/>
</dbReference>
<dbReference type="InterPro" id="IPR036291">
    <property type="entry name" value="NAD(P)-bd_dom_sf"/>
</dbReference>
<dbReference type="NCBIfam" id="TIGR01771">
    <property type="entry name" value="L-LDH-NAD"/>
    <property type="match status" value="1"/>
</dbReference>
<dbReference type="NCBIfam" id="NF000824">
    <property type="entry name" value="PRK00066.1"/>
    <property type="match status" value="1"/>
</dbReference>
<dbReference type="PANTHER" id="PTHR43128">
    <property type="entry name" value="L-2-HYDROXYCARBOXYLATE DEHYDROGENASE (NAD(P)(+))"/>
    <property type="match status" value="1"/>
</dbReference>
<dbReference type="PANTHER" id="PTHR43128:SF16">
    <property type="entry name" value="L-LACTATE DEHYDROGENASE"/>
    <property type="match status" value="1"/>
</dbReference>
<dbReference type="Pfam" id="PF02866">
    <property type="entry name" value="Ldh_1_C"/>
    <property type="match status" value="1"/>
</dbReference>
<dbReference type="Pfam" id="PF00056">
    <property type="entry name" value="Ldh_1_N"/>
    <property type="match status" value="1"/>
</dbReference>
<dbReference type="PIRSF" id="PIRSF000102">
    <property type="entry name" value="Lac_mal_DH"/>
    <property type="match status" value="1"/>
</dbReference>
<dbReference type="PRINTS" id="PR00086">
    <property type="entry name" value="LLDHDRGNASE"/>
</dbReference>
<dbReference type="SUPFAM" id="SSF56327">
    <property type="entry name" value="LDH C-terminal domain-like"/>
    <property type="match status" value="1"/>
</dbReference>
<dbReference type="SUPFAM" id="SSF51735">
    <property type="entry name" value="NAD(P)-binding Rossmann-fold domains"/>
    <property type="match status" value="1"/>
</dbReference>
<dbReference type="PROSITE" id="PS00064">
    <property type="entry name" value="L_LDH"/>
    <property type="match status" value="1"/>
</dbReference>
<feature type="initiator methionine" description="Removed" evidence="2">
    <location>
        <position position="1"/>
    </location>
</feature>
<feature type="chain" id="PRO_0000168398" description="L-lactate dehydrogenase">
    <location>
        <begin position="2"/>
        <end position="328"/>
    </location>
</feature>
<feature type="active site" description="Proton acceptor" evidence="1">
    <location>
        <position position="181"/>
    </location>
</feature>
<feature type="binding site" evidence="1">
    <location>
        <position position="18"/>
    </location>
    <ligand>
        <name>NAD(+)</name>
        <dbReference type="ChEBI" id="CHEBI:57540"/>
    </ligand>
</feature>
<feature type="binding site" evidence="1">
    <location>
        <position position="39"/>
    </location>
    <ligand>
        <name>NAD(+)</name>
        <dbReference type="ChEBI" id="CHEBI:57540"/>
    </ligand>
</feature>
<feature type="binding site" evidence="1">
    <location>
        <position position="46"/>
    </location>
    <ligand>
        <name>NAD(+)</name>
        <dbReference type="ChEBI" id="CHEBI:57540"/>
    </ligand>
</feature>
<feature type="binding site" evidence="1">
    <location>
        <position position="71"/>
    </location>
    <ligand>
        <name>NAD(+)</name>
        <dbReference type="ChEBI" id="CHEBI:57540"/>
    </ligand>
</feature>
<feature type="binding site" evidence="1">
    <location>
        <begin position="85"/>
        <end position="86"/>
    </location>
    <ligand>
        <name>NAD(+)</name>
        <dbReference type="ChEBI" id="CHEBI:57540"/>
    </ligand>
</feature>
<feature type="binding site" evidence="1">
    <location>
        <position position="88"/>
    </location>
    <ligand>
        <name>substrate</name>
    </ligand>
</feature>
<feature type="binding site" evidence="1">
    <location>
        <position position="94"/>
    </location>
    <ligand>
        <name>substrate</name>
    </ligand>
</feature>
<feature type="binding site" evidence="1">
    <location>
        <position position="107"/>
    </location>
    <ligand>
        <name>NAD(+)</name>
        <dbReference type="ChEBI" id="CHEBI:57540"/>
    </ligand>
</feature>
<feature type="binding site" evidence="1">
    <location>
        <begin position="124"/>
        <end position="126"/>
    </location>
    <ligand>
        <name>NAD(+)</name>
        <dbReference type="ChEBI" id="CHEBI:57540"/>
    </ligand>
</feature>
<feature type="binding site" evidence="1">
    <location>
        <begin position="126"/>
        <end position="129"/>
    </location>
    <ligand>
        <name>substrate</name>
    </ligand>
</feature>
<feature type="binding site" evidence="1">
    <location>
        <position position="149"/>
    </location>
    <ligand>
        <name>NAD(+)</name>
        <dbReference type="ChEBI" id="CHEBI:57540"/>
    </ligand>
</feature>
<feature type="binding site" evidence="1">
    <location>
        <begin position="154"/>
        <end position="157"/>
    </location>
    <ligand>
        <name>substrate</name>
    </ligand>
</feature>
<feature type="binding site" evidence="1">
    <location>
        <position position="159"/>
    </location>
    <ligand>
        <name>beta-D-fructose 1,6-bisphosphate</name>
        <dbReference type="ChEBI" id="CHEBI:32966"/>
        <note>allosteric activator</note>
    </ligand>
</feature>
<feature type="binding site" evidence="1">
    <location>
        <position position="174"/>
    </location>
    <ligand>
        <name>beta-D-fructose 1,6-bisphosphate</name>
        <dbReference type="ChEBI" id="CHEBI:32966"/>
        <note>allosteric activator</note>
    </ligand>
</feature>
<feature type="binding site" evidence="1">
    <location>
        <position position="235"/>
    </location>
    <ligand>
        <name>substrate</name>
    </ligand>
</feature>
<feature type="modified residue" description="Phosphotyrosine" evidence="1">
    <location>
        <position position="226"/>
    </location>
</feature>
<accession>P0A3N0</accession>
<accession>O33734</accession>
<accession>Q8VLI8</accession>
<accession>Q8VVY0</accession>
<accession>Q9R868</accession>
<gene>
    <name evidence="1" type="primary">ldh</name>
    <name type="ordered locus">spr1100</name>
</gene>
<reference key="1">
    <citation type="journal article" date="1998" name="Curr. Microbiol.">
        <title>Nucleotide sequence and chromosomal location of L-lactate dehydrogenase gene from Streptococcus pneumoniae.</title>
        <authorList>
            <person name="Jado I."/>
            <person name="Fenoll A."/>
            <person name="Casal J."/>
            <person name="Perez A."/>
        </authorList>
    </citation>
    <scope>NUCLEOTIDE SEQUENCE [GENOMIC DNA]</scope>
    <scope>PROTEIN SEQUENCE OF 2-13</scope>
</reference>
<reference key="2">
    <citation type="journal article" date="2001" name="J. Bacteriol.">
        <title>Genome of the bacterium Streptococcus pneumoniae strain R6.</title>
        <authorList>
            <person name="Hoskins J."/>
            <person name="Alborn W.E. Jr."/>
            <person name="Arnold J."/>
            <person name="Blaszczak L.C."/>
            <person name="Burgett S."/>
            <person name="DeHoff B.S."/>
            <person name="Estrem S.T."/>
            <person name="Fritz L."/>
            <person name="Fu D.-J."/>
            <person name="Fuller W."/>
            <person name="Geringer C."/>
            <person name="Gilmour R."/>
            <person name="Glass J.S."/>
            <person name="Khoja H."/>
            <person name="Kraft A.R."/>
            <person name="Lagace R.E."/>
            <person name="LeBlanc D.J."/>
            <person name="Lee L.N."/>
            <person name="Lefkowitz E.J."/>
            <person name="Lu J."/>
            <person name="Matsushima P."/>
            <person name="McAhren S.M."/>
            <person name="McHenney M."/>
            <person name="McLeaster K."/>
            <person name="Mundy C.W."/>
            <person name="Nicas T.I."/>
            <person name="Norris F.H."/>
            <person name="O'Gara M."/>
            <person name="Peery R.B."/>
            <person name="Robertson G.T."/>
            <person name="Rockey P."/>
            <person name="Sun P.-M."/>
            <person name="Winkler M.E."/>
            <person name="Yang Y."/>
            <person name="Young-Bellido M."/>
            <person name="Zhao G."/>
            <person name="Zook C.A."/>
            <person name="Baltz R.H."/>
            <person name="Jaskunas S.R."/>
            <person name="Rosteck P.R. Jr."/>
            <person name="Skatrud P.L."/>
            <person name="Glass J.I."/>
        </authorList>
    </citation>
    <scope>NUCLEOTIDE SEQUENCE [LARGE SCALE GENOMIC DNA]</scope>
    <source>
        <strain>ATCC BAA-255 / R6</strain>
    </source>
</reference>
<protein>
    <recommendedName>
        <fullName evidence="1">L-lactate dehydrogenase</fullName>
        <shortName evidence="1">L-LDH</shortName>
        <ecNumber evidence="1">1.1.1.27</ecNumber>
    </recommendedName>
</protein>
<organism>
    <name type="scientific">Streptococcus pneumoniae (strain ATCC BAA-255 / R6)</name>
    <dbReference type="NCBI Taxonomy" id="171101"/>
    <lineage>
        <taxon>Bacteria</taxon>
        <taxon>Bacillati</taxon>
        <taxon>Bacillota</taxon>
        <taxon>Bacilli</taxon>
        <taxon>Lactobacillales</taxon>
        <taxon>Streptococcaceae</taxon>
        <taxon>Streptococcus</taxon>
    </lineage>
</organism>
<proteinExistence type="evidence at protein level"/>
<evidence type="ECO:0000255" key="1">
    <source>
        <dbReference type="HAMAP-Rule" id="MF_00488"/>
    </source>
</evidence>
<evidence type="ECO:0000269" key="2">
    <source>
    </source>
</evidence>
<evidence type="ECO:0000305" key="3"/>
<comment type="function">
    <text evidence="1">Catalyzes the conversion of lactate to pyruvate.</text>
</comment>
<comment type="catalytic activity">
    <reaction evidence="1">
        <text>(S)-lactate + NAD(+) = pyruvate + NADH + H(+)</text>
        <dbReference type="Rhea" id="RHEA:23444"/>
        <dbReference type="ChEBI" id="CHEBI:15361"/>
        <dbReference type="ChEBI" id="CHEBI:15378"/>
        <dbReference type="ChEBI" id="CHEBI:16651"/>
        <dbReference type="ChEBI" id="CHEBI:57540"/>
        <dbReference type="ChEBI" id="CHEBI:57945"/>
        <dbReference type="EC" id="1.1.1.27"/>
    </reaction>
</comment>
<comment type="activity regulation">
    <text evidence="1">Allosterically activated by fructose 1,6-bisphosphate (FBP).</text>
</comment>
<comment type="pathway">
    <text evidence="1">Fermentation; pyruvate fermentation to lactate; (S)-lactate from pyruvate: step 1/1.</text>
</comment>
<comment type="subunit">
    <text evidence="1">Homotetramer.</text>
</comment>
<comment type="subcellular location">
    <subcellularLocation>
        <location evidence="1">Cytoplasm</location>
    </subcellularLocation>
</comment>
<comment type="similarity">
    <text evidence="1 3">Belongs to the LDH/MDH superfamily. LDH family.</text>
</comment>
<name>LDH_STRR6</name>